<organism>
    <name type="scientific">Thermococcus gammatolerans (strain DSM 15229 / JCM 11827 / EJ3)</name>
    <dbReference type="NCBI Taxonomy" id="593117"/>
    <lineage>
        <taxon>Archaea</taxon>
        <taxon>Methanobacteriati</taxon>
        <taxon>Methanobacteriota</taxon>
        <taxon>Thermococci</taxon>
        <taxon>Thermococcales</taxon>
        <taxon>Thermococcaceae</taxon>
        <taxon>Thermococcus</taxon>
    </lineage>
</organism>
<dbReference type="EMBL" id="CP001398">
    <property type="protein sequence ID" value="ACS32786.1"/>
    <property type="molecule type" value="Genomic_DNA"/>
</dbReference>
<dbReference type="RefSeq" id="WP_015857905.1">
    <property type="nucleotide sequence ID" value="NC_012804.1"/>
</dbReference>
<dbReference type="SMR" id="C5A3H4"/>
<dbReference type="STRING" id="593117.TGAM_0284"/>
<dbReference type="PaxDb" id="593117-TGAM_0284"/>
<dbReference type="GeneID" id="7988940"/>
<dbReference type="KEGG" id="tga:TGAM_0284"/>
<dbReference type="PATRIC" id="fig|593117.10.peg.287"/>
<dbReference type="eggNOG" id="arCOG03055">
    <property type="taxonomic scope" value="Archaea"/>
</dbReference>
<dbReference type="HOGENOM" id="CLU_007894_5_1_2"/>
<dbReference type="OrthoDB" id="146638at2157"/>
<dbReference type="Proteomes" id="UP000001488">
    <property type="component" value="Chromosome"/>
</dbReference>
<dbReference type="GO" id="GO:0005886">
    <property type="term" value="C:plasma membrane"/>
    <property type="evidence" value="ECO:0007669"/>
    <property type="project" value="UniProtKB-SubCell"/>
</dbReference>
<dbReference type="GO" id="GO:0065002">
    <property type="term" value="P:intracellular protein transmembrane transport"/>
    <property type="evidence" value="ECO:0007669"/>
    <property type="project" value="UniProtKB-UniRule"/>
</dbReference>
<dbReference type="GO" id="GO:0006605">
    <property type="term" value="P:protein targeting"/>
    <property type="evidence" value="ECO:0007669"/>
    <property type="project" value="UniProtKB-UniRule"/>
</dbReference>
<dbReference type="Gene3D" id="3.30.70.3220">
    <property type="match status" value="1"/>
</dbReference>
<dbReference type="Gene3D" id="1.20.1640.10">
    <property type="entry name" value="Multidrug efflux transporter AcrB transmembrane domain"/>
    <property type="match status" value="1"/>
</dbReference>
<dbReference type="HAMAP" id="MF_01463_A">
    <property type="entry name" value="SecD_A"/>
    <property type="match status" value="1"/>
</dbReference>
<dbReference type="InterPro" id="IPR022813">
    <property type="entry name" value="SecD/SecF_arch_bac"/>
</dbReference>
<dbReference type="InterPro" id="IPR024912">
    <property type="entry name" value="SecD_arc"/>
</dbReference>
<dbReference type="InterPro" id="IPR048634">
    <property type="entry name" value="SecD_SecF_C"/>
</dbReference>
<dbReference type="NCBIfam" id="NF006216">
    <property type="entry name" value="PRK08343.1-2"/>
    <property type="match status" value="1"/>
</dbReference>
<dbReference type="PANTHER" id="PTHR30081:SF1">
    <property type="entry name" value="PROTEIN TRANSLOCASE SUBUNIT SECD"/>
    <property type="match status" value="1"/>
</dbReference>
<dbReference type="PANTHER" id="PTHR30081">
    <property type="entry name" value="PROTEIN-EXPORT MEMBRANE PROTEIN SEC"/>
    <property type="match status" value="1"/>
</dbReference>
<dbReference type="Pfam" id="PF02355">
    <property type="entry name" value="SecD_SecF_C"/>
    <property type="match status" value="1"/>
</dbReference>
<dbReference type="SUPFAM" id="SSF82866">
    <property type="entry name" value="Multidrug efflux transporter AcrB transmembrane domain"/>
    <property type="match status" value="1"/>
</dbReference>
<comment type="function">
    <text evidence="1">Involved in protein export.</text>
</comment>
<comment type="subunit">
    <text evidence="1">Part of the protein translocation apparatus. Forms a complex with SecF.</text>
</comment>
<comment type="subcellular location">
    <subcellularLocation>
        <location evidence="1">Cell membrane</location>
        <topology evidence="1">Multi-pass membrane protein</topology>
    </subcellularLocation>
</comment>
<comment type="similarity">
    <text evidence="1">Belongs to the SecD/SecF family. SecD subfamily.</text>
</comment>
<feature type="chain" id="PRO_0000412689" description="Protein-export membrane protein SecD">
    <location>
        <begin position="1"/>
        <end position="525"/>
    </location>
</feature>
<feature type="transmembrane region" description="Helical" evidence="1">
    <location>
        <begin position="16"/>
        <end position="36"/>
    </location>
</feature>
<feature type="transmembrane region" description="Helical" evidence="1">
    <location>
        <begin position="368"/>
        <end position="388"/>
    </location>
</feature>
<feature type="transmembrane region" description="Helical" evidence="1">
    <location>
        <begin position="395"/>
        <end position="415"/>
    </location>
</feature>
<feature type="transmembrane region" description="Helical" evidence="1">
    <location>
        <begin position="421"/>
        <end position="441"/>
    </location>
</feature>
<feature type="transmembrane region" description="Helical" evidence="1">
    <location>
        <begin position="466"/>
        <end position="486"/>
    </location>
</feature>
<feature type="transmembrane region" description="Helical" evidence="1">
    <location>
        <begin position="488"/>
        <end position="508"/>
    </location>
</feature>
<name>SECD_THEGJ</name>
<evidence type="ECO:0000255" key="1">
    <source>
        <dbReference type="HAMAP-Rule" id="MF_01463"/>
    </source>
</evidence>
<accession>C5A3H4</accession>
<sequence length="525" mass="57348">MARKKGVKALLLNWRVLLLILFLIGSVVSMSIKGLTYGIDIGGGVALIAEPEKPVSKDTLNGIITSLQNRLNTFGVKDITIEAQHDPETGQSLIVVKIANVTLDEANQIKDLIESQGVLYMEFNGVIFATGTDVTVHSSDYGLDLQECPTCWYVGFELSGKAQNKFKKIAAGKLGWPIDIYLDPPVNSLLVVSPRVYQEMNSGDFMGAPSEGTPKPLVERLKEAFNITVVEYSNQTAEDIVENATALGKDKIILADVPEELYNDVRELVLSKDLKLRVSHYTPQQGEDLKDFVKRILNLYGPYVLKFDPAKGETTRLKLSGSAPTKEEALQEARKIYSVLRSGSLAVKLHVVSEEYISPTLGASFKKQAIIAGIGALIAVLLIVYFHYRRWRIAIPVASTSLFEVIIILGIAALIRWNLDLPSIAGIIAAIGTGVDQQIVITDELLGGTAGRVTRRMSALRRMARAFFIIFASAATTIVAMSFLLVYFVGTLKGFAVTTILGVLIGVLVTRPAYAEIAKYLLSLE</sequence>
<proteinExistence type="inferred from homology"/>
<gene>
    <name evidence="1" type="primary">secD</name>
    <name type="ordered locus">TGAM_0284</name>
</gene>
<protein>
    <recommendedName>
        <fullName evidence="1">Protein-export membrane protein SecD</fullName>
    </recommendedName>
</protein>
<keyword id="KW-1003">Cell membrane</keyword>
<keyword id="KW-0472">Membrane</keyword>
<keyword id="KW-0653">Protein transport</keyword>
<keyword id="KW-1185">Reference proteome</keyword>
<keyword id="KW-0811">Translocation</keyword>
<keyword id="KW-0812">Transmembrane</keyword>
<keyword id="KW-1133">Transmembrane helix</keyword>
<keyword id="KW-0813">Transport</keyword>
<reference key="1">
    <citation type="journal article" date="2007" name="Genome Biol.">
        <title>Genome analysis and genome-wide proteomics of Thermococcus gammatolerans, the most radioresistant organism known amongst the Archaea.</title>
        <authorList>
            <person name="Zivanovic Y."/>
            <person name="Armengaud J."/>
            <person name="Lagorce A."/>
            <person name="Leplat C."/>
            <person name="Guerin P."/>
            <person name="Dutertre M."/>
            <person name="Anthouard V."/>
            <person name="Forterre P."/>
            <person name="Wincker P."/>
            <person name="Confalonieri F."/>
        </authorList>
    </citation>
    <scope>NUCLEOTIDE SEQUENCE [LARGE SCALE GENOMIC DNA]</scope>
    <source>
        <strain>DSM 15229 / JCM 11827 / EJ3</strain>
    </source>
</reference>